<sequence length="283" mass="29658">MSAHIIDGNLLSQQLRQDVATRAAALSAKGKQPGLAVILVGADPASQVYVRNKVKACEDNGLFSLLEKYEADMTEAALLARIAALNNDPAIHGILVQMPLPKHIDPTKVIEAISPRKDVDGYSVLSAGELLTGLPGFRPCTPYGCMKLIESTGTKIAGKHAVVIGRSNTVGKPMALLLLQANATVTICHSGTADLGYHTRQADIVVAATGRRNTLTADMIKPGAIVIDVGINRDDNGKLCGDVDFAAAKEVAGHISPVPGGVGPMTITMLLVNTIEAAERETN</sequence>
<accession>A4G352</accession>
<dbReference type="EC" id="1.5.1.5" evidence="1"/>
<dbReference type="EC" id="3.5.4.9" evidence="1"/>
<dbReference type="EMBL" id="CU207211">
    <property type="protein sequence ID" value="CAL60939.1"/>
    <property type="molecule type" value="Genomic_DNA"/>
</dbReference>
<dbReference type="SMR" id="A4G352"/>
<dbReference type="STRING" id="204773.HEAR0745"/>
<dbReference type="KEGG" id="har:HEAR0745"/>
<dbReference type="eggNOG" id="COG0190">
    <property type="taxonomic scope" value="Bacteria"/>
</dbReference>
<dbReference type="HOGENOM" id="CLU_034045_2_1_4"/>
<dbReference type="OrthoDB" id="9803580at2"/>
<dbReference type="UniPathway" id="UPA00193"/>
<dbReference type="Proteomes" id="UP000006697">
    <property type="component" value="Chromosome"/>
</dbReference>
<dbReference type="GO" id="GO:0005829">
    <property type="term" value="C:cytosol"/>
    <property type="evidence" value="ECO:0007669"/>
    <property type="project" value="TreeGrafter"/>
</dbReference>
<dbReference type="GO" id="GO:0004477">
    <property type="term" value="F:methenyltetrahydrofolate cyclohydrolase activity"/>
    <property type="evidence" value="ECO:0007669"/>
    <property type="project" value="UniProtKB-UniRule"/>
</dbReference>
<dbReference type="GO" id="GO:0004488">
    <property type="term" value="F:methylenetetrahydrofolate dehydrogenase (NADP+) activity"/>
    <property type="evidence" value="ECO:0007669"/>
    <property type="project" value="UniProtKB-UniRule"/>
</dbReference>
<dbReference type="GO" id="GO:0000105">
    <property type="term" value="P:L-histidine biosynthetic process"/>
    <property type="evidence" value="ECO:0007669"/>
    <property type="project" value="UniProtKB-KW"/>
</dbReference>
<dbReference type="GO" id="GO:0009086">
    <property type="term" value="P:methionine biosynthetic process"/>
    <property type="evidence" value="ECO:0007669"/>
    <property type="project" value="UniProtKB-KW"/>
</dbReference>
<dbReference type="GO" id="GO:0006164">
    <property type="term" value="P:purine nucleotide biosynthetic process"/>
    <property type="evidence" value="ECO:0007669"/>
    <property type="project" value="UniProtKB-KW"/>
</dbReference>
<dbReference type="GO" id="GO:0035999">
    <property type="term" value="P:tetrahydrofolate interconversion"/>
    <property type="evidence" value="ECO:0007669"/>
    <property type="project" value="UniProtKB-UniRule"/>
</dbReference>
<dbReference type="CDD" id="cd01080">
    <property type="entry name" value="NAD_bind_m-THF_DH_Cyclohyd"/>
    <property type="match status" value="1"/>
</dbReference>
<dbReference type="FunFam" id="3.40.50.720:FF:000094">
    <property type="entry name" value="Bifunctional protein FolD"/>
    <property type="match status" value="1"/>
</dbReference>
<dbReference type="FunFam" id="3.40.50.10860:FF:000005">
    <property type="entry name" value="C-1-tetrahydrofolate synthase, cytoplasmic, putative"/>
    <property type="match status" value="1"/>
</dbReference>
<dbReference type="Gene3D" id="3.40.50.10860">
    <property type="entry name" value="Leucine Dehydrogenase, chain A, domain 1"/>
    <property type="match status" value="1"/>
</dbReference>
<dbReference type="Gene3D" id="3.40.50.720">
    <property type="entry name" value="NAD(P)-binding Rossmann-like Domain"/>
    <property type="match status" value="1"/>
</dbReference>
<dbReference type="HAMAP" id="MF_01576">
    <property type="entry name" value="THF_DHG_CYH"/>
    <property type="match status" value="1"/>
</dbReference>
<dbReference type="InterPro" id="IPR046346">
    <property type="entry name" value="Aminoacid_DH-like_N_sf"/>
</dbReference>
<dbReference type="InterPro" id="IPR036291">
    <property type="entry name" value="NAD(P)-bd_dom_sf"/>
</dbReference>
<dbReference type="InterPro" id="IPR000672">
    <property type="entry name" value="THF_DH/CycHdrlase"/>
</dbReference>
<dbReference type="InterPro" id="IPR020630">
    <property type="entry name" value="THF_DH/CycHdrlase_cat_dom"/>
</dbReference>
<dbReference type="InterPro" id="IPR020867">
    <property type="entry name" value="THF_DH/CycHdrlase_CS"/>
</dbReference>
<dbReference type="InterPro" id="IPR020631">
    <property type="entry name" value="THF_DH/CycHdrlase_NAD-bd_dom"/>
</dbReference>
<dbReference type="NCBIfam" id="NF008058">
    <property type="entry name" value="PRK10792.1"/>
    <property type="match status" value="1"/>
</dbReference>
<dbReference type="NCBIfam" id="NF010783">
    <property type="entry name" value="PRK14186.1"/>
    <property type="match status" value="1"/>
</dbReference>
<dbReference type="NCBIfam" id="NF010786">
    <property type="entry name" value="PRK14189.1"/>
    <property type="match status" value="1"/>
</dbReference>
<dbReference type="PANTHER" id="PTHR48099:SF5">
    <property type="entry name" value="C-1-TETRAHYDROFOLATE SYNTHASE, CYTOPLASMIC"/>
    <property type="match status" value="1"/>
</dbReference>
<dbReference type="PANTHER" id="PTHR48099">
    <property type="entry name" value="C-1-TETRAHYDROFOLATE SYNTHASE, CYTOPLASMIC-RELATED"/>
    <property type="match status" value="1"/>
</dbReference>
<dbReference type="Pfam" id="PF00763">
    <property type="entry name" value="THF_DHG_CYH"/>
    <property type="match status" value="1"/>
</dbReference>
<dbReference type="Pfam" id="PF02882">
    <property type="entry name" value="THF_DHG_CYH_C"/>
    <property type="match status" value="1"/>
</dbReference>
<dbReference type="PRINTS" id="PR00085">
    <property type="entry name" value="THFDHDRGNASE"/>
</dbReference>
<dbReference type="SUPFAM" id="SSF53223">
    <property type="entry name" value="Aminoacid dehydrogenase-like, N-terminal domain"/>
    <property type="match status" value="1"/>
</dbReference>
<dbReference type="SUPFAM" id="SSF51735">
    <property type="entry name" value="NAD(P)-binding Rossmann-fold domains"/>
    <property type="match status" value="1"/>
</dbReference>
<dbReference type="PROSITE" id="PS00767">
    <property type="entry name" value="THF_DHG_CYH_2"/>
    <property type="match status" value="1"/>
</dbReference>
<organism>
    <name type="scientific">Herminiimonas arsenicoxydans</name>
    <dbReference type="NCBI Taxonomy" id="204773"/>
    <lineage>
        <taxon>Bacteria</taxon>
        <taxon>Pseudomonadati</taxon>
        <taxon>Pseudomonadota</taxon>
        <taxon>Betaproteobacteria</taxon>
        <taxon>Burkholderiales</taxon>
        <taxon>Oxalobacteraceae</taxon>
        <taxon>Herminiimonas</taxon>
    </lineage>
</organism>
<reference key="1">
    <citation type="journal article" date="2007" name="PLoS Genet.">
        <title>A tale of two oxidation states: bacterial colonization of arsenic-rich environments.</title>
        <authorList>
            <person name="Muller D."/>
            <person name="Medigue C."/>
            <person name="Koechler S."/>
            <person name="Barbe V."/>
            <person name="Barakat M."/>
            <person name="Talla E."/>
            <person name="Bonnefoy V."/>
            <person name="Krin E."/>
            <person name="Arsene-Ploetze F."/>
            <person name="Carapito C."/>
            <person name="Chandler M."/>
            <person name="Cournoyer B."/>
            <person name="Cruveiller S."/>
            <person name="Dossat C."/>
            <person name="Duval S."/>
            <person name="Heymann M."/>
            <person name="Leize E."/>
            <person name="Lieutaud A."/>
            <person name="Lievremont D."/>
            <person name="Makita Y."/>
            <person name="Mangenot S."/>
            <person name="Nitschke W."/>
            <person name="Ortet P."/>
            <person name="Perdrial N."/>
            <person name="Schoepp B."/>
            <person name="Siguier P."/>
            <person name="Simeonova D.D."/>
            <person name="Rouy Z."/>
            <person name="Segurens B."/>
            <person name="Turlin E."/>
            <person name="Vallenet D."/>
            <person name="van Dorsselaer A."/>
            <person name="Weiss S."/>
            <person name="Weissenbach J."/>
            <person name="Lett M.-C."/>
            <person name="Danchin A."/>
            <person name="Bertin P.N."/>
        </authorList>
    </citation>
    <scope>NUCLEOTIDE SEQUENCE [LARGE SCALE GENOMIC DNA]</scope>
    <source>
        <strain>ULPAs1</strain>
    </source>
</reference>
<protein>
    <recommendedName>
        <fullName evidence="1">Bifunctional protein FolD</fullName>
    </recommendedName>
    <domain>
        <recommendedName>
            <fullName evidence="1">Methylenetetrahydrofolate dehydrogenase</fullName>
            <ecNumber evidence="1">1.5.1.5</ecNumber>
        </recommendedName>
    </domain>
    <domain>
        <recommendedName>
            <fullName evidence="1">Methenyltetrahydrofolate cyclohydrolase</fullName>
            <ecNumber evidence="1">3.5.4.9</ecNumber>
        </recommendedName>
    </domain>
</protein>
<gene>
    <name evidence="1" type="primary">folD</name>
    <name type="ordered locus">HEAR0745</name>
</gene>
<proteinExistence type="inferred from homology"/>
<comment type="function">
    <text evidence="1">Catalyzes the oxidation of 5,10-methylenetetrahydrofolate to 5,10-methenyltetrahydrofolate and then the hydrolysis of 5,10-methenyltetrahydrofolate to 10-formyltetrahydrofolate.</text>
</comment>
<comment type="catalytic activity">
    <reaction evidence="1">
        <text>(6R)-5,10-methylene-5,6,7,8-tetrahydrofolate + NADP(+) = (6R)-5,10-methenyltetrahydrofolate + NADPH</text>
        <dbReference type="Rhea" id="RHEA:22812"/>
        <dbReference type="ChEBI" id="CHEBI:15636"/>
        <dbReference type="ChEBI" id="CHEBI:57455"/>
        <dbReference type="ChEBI" id="CHEBI:57783"/>
        <dbReference type="ChEBI" id="CHEBI:58349"/>
        <dbReference type="EC" id="1.5.1.5"/>
    </reaction>
</comment>
<comment type="catalytic activity">
    <reaction evidence="1">
        <text>(6R)-5,10-methenyltetrahydrofolate + H2O = (6R)-10-formyltetrahydrofolate + H(+)</text>
        <dbReference type="Rhea" id="RHEA:23700"/>
        <dbReference type="ChEBI" id="CHEBI:15377"/>
        <dbReference type="ChEBI" id="CHEBI:15378"/>
        <dbReference type="ChEBI" id="CHEBI:57455"/>
        <dbReference type="ChEBI" id="CHEBI:195366"/>
        <dbReference type="EC" id="3.5.4.9"/>
    </reaction>
</comment>
<comment type="pathway">
    <text evidence="1">One-carbon metabolism; tetrahydrofolate interconversion.</text>
</comment>
<comment type="subunit">
    <text evidence="1">Homodimer.</text>
</comment>
<comment type="similarity">
    <text evidence="1">Belongs to the tetrahydrofolate dehydrogenase/cyclohydrolase family.</text>
</comment>
<evidence type="ECO:0000255" key="1">
    <source>
        <dbReference type="HAMAP-Rule" id="MF_01576"/>
    </source>
</evidence>
<feature type="chain" id="PRO_0000305826" description="Bifunctional protein FolD">
    <location>
        <begin position="1"/>
        <end position="283"/>
    </location>
</feature>
<feature type="binding site" evidence="1">
    <location>
        <begin position="165"/>
        <end position="167"/>
    </location>
    <ligand>
        <name>NADP(+)</name>
        <dbReference type="ChEBI" id="CHEBI:58349"/>
    </ligand>
</feature>
<feature type="binding site" evidence="1">
    <location>
        <position position="190"/>
    </location>
    <ligand>
        <name>NADP(+)</name>
        <dbReference type="ChEBI" id="CHEBI:58349"/>
    </ligand>
</feature>
<feature type="binding site" evidence="1">
    <location>
        <position position="231"/>
    </location>
    <ligand>
        <name>NADP(+)</name>
        <dbReference type="ChEBI" id="CHEBI:58349"/>
    </ligand>
</feature>
<keyword id="KW-0028">Amino-acid biosynthesis</keyword>
<keyword id="KW-0368">Histidine biosynthesis</keyword>
<keyword id="KW-0378">Hydrolase</keyword>
<keyword id="KW-0486">Methionine biosynthesis</keyword>
<keyword id="KW-0511">Multifunctional enzyme</keyword>
<keyword id="KW-0521">NADP</keyword>
<keyword id="KW-0554">One-carbon metabolism</keyword>
<keyword id="KW-0560">Oxidoreductase</keyword>
<keyword id="KW-0658">Purine biosynthesis</keyword>
<keyword id="KW-1185">Reference proteome</keyword>
<name>FOLD_HERAR</name>